<protein>
    <recommendedName>
        <fullName>Response regulator protein GraR</fullName>
    </recommendedName>
    <alternativeName>
        <fullName>Glycopeptide resistance-associated protein R</fullName>
    </alternativeName>
</protein>
<sequence>MQILLVEDDNTLFQELKKELEQWDFNVAGIEDFGKVMDTFESFNPEIVILDVQLPKYDGFYWCRKMREVSNVPILFLSSRDNPMDQVMSMELGADDYMQKPFYTNVLIAKLQAIYRRVYEFTAEEKRTLTWQDAVVDLSKDSIQKGDDTIFLSKTEMIILEILITKKNQIVSRDTIITALWDDEAFVSDNTLTVNVNRLRKKLSEISMDSAIETKVGKGYMAHE</sequence>
<evidence type="ECO:0000250" key="1"/>
<evidence type="ECO:0000250" key="2">
    <source>
        <dbReference type="UniProtKB" id="Q2G0D9"/>
    </source>
</evidence>
<evidence type="ECO:0000250" key="3">
    <source>
        <dbReference type="UniProtKB" id="Q2G0E0"/>
    </source>
</evidence>
<evidence type="ECO:0000255" key="4">
    <source>
        <dbReference type="PROSITE-ProRule" id="PRU00169"/>
    </source>
</evidence>
<evidence type="ECO:0000255" key="5">
    <source>
        <dbReference type="PROSITE-ProRule" id="PRU01091"/>
    </source>
</evidence>
<accession>A6TZD6</accession>
<keyword id="KW-0010">Activator</keyword>
<keyword id="KW-0046">Antibiotic resistance</keyword>
<keyword id="KW-0963">Cytoplasm</keyword>
<keyword id="KW-0238">DNA-binding</keyword>
<keyword id="KW-0597">Phosphoprotein</keyword>
<keyword id="KW-0678">Repressor</keyword>
<keyword id="KW-0804">Transcription</keyword>
<keyword id="KW-0805">Transcription regulation</keyword>
<keyword id="KW-0902">Two-component regulatory system</keyword>
<keyword id="KW-0843">Virulence</keyword>
<dbReference type="EMBL" id="CP000736">
    <property type="protein sequence ID" value="ABR51554.1"/>
    <property type="molecule type" value="Genomic_DNA"/>
</dbReference>
<dbReference type="SMR" id="A6TZD6"/>
<dbReference type="KEGG" id="sah:SaurJH1_0697"/>
<dbReference type="HOGENOM" id="CLU_000445_30_3_9"/>
<dbReference type="GO" id="GO:0005829">
    <property type="term" value="C:cytosol"/>
    <property type="evidence" value="ECO:0007669"/>
    <property type="project" value="TreeGrafter"/>
</dbReference>
<dbReference type="GO" id="GO:0032993">
    <property type="term" value="C:protein-DNA complex"/>
    <property type="evidence" value="ECO:0007669"/>
    <property type="project" value="TreeGrafter"/>
</dbReference>
<dbReference type="GO" id="GO:0000156">
    <property type="term" value="F:phosphorelay response regulator activity"/>
    <property type="evidence" value="ECO:0007669"/>
    <property type="project" value="TreeGrafter"/>
</dbReference>
<dbReference type="GO" id="GO:0000976">
    <property type="term" value="F:transcription cis-regulatory region binding"/>
    <property type="evidence" value="ECO:0007669"/>
    <property type="project" value="TreeGrafter"/>
</dbReference>
<dbReference type="GO" id="GO:0006355">
    <property type="term" value="P:regulation of DNA-templated transcription"/>
    <property type="evidence" value="ECO:0007669"/>
    <property type="project" value="InterPro"/>
</dbReference>
<dbReference type="GO" id="GO:0046677">
    <property type="term" value="P:response to antibiotic"/>
    <property type="evidence" value="ECO:0007669"/>
    <property type="project" value="UniProtKB-KW"/>
</dbReference>
<dbReference type="CDD" id="cd18159">
    <property type="entry name" value="REC_OmpR_NsrR-like"/>
    <property type="match status" value="1"/>
</dbReference>
<dbReference type="CDD" id="cd00383">
    <property type="entry name" value="trans_reg_C"/>
    <property type="match status" value="1"/>
</dbReference>
<dbReference type="FunFam" id="3.40.50.2300:FF:000232">
    <property type="entry name" value="Response regulator GraR"/>
    <property type="match status" value="1"/>
</dbReference>
<dbReference type="FunFam" id="1.10.10.10:FF:000546">
    <property type="entry name" value="Two-component response regulator GraR"/>
    <property type="match status" value="1"/>
</dbReference>
<dbReference type="Gene3D" id="3.40.50.2300">
    <property type="match status" value="1"/>
</dbReference>
<dbReference type="Gene3D" id="1.10.10.10">
    <property type="entry name" value="Winged helix-like DNA-binding domain superfamily/Winged helix DNA-binding domain"/>
    <property type="match status" value="1"/>
</dbReference>
<dbReference type="InterPro" id="IPR011006">
    <property type="entry name" value="CheY-like_superfamily"/>
</dbReference>
<dbReference type="InterPro" id="IPR001867">
    <property type="entry name" value="OmpR/PhoB-type_DNA-bd"/>
</dbReference>
<dbReference type="InterPro" id="IPR016032">
    <property type="entry name" value="Sig_transdc_resp-reg_C-effctor"/>
</dbReference>
<dbReference type="InterPro" id="IPR001789">
    <property type="entry name" value="Sig_transdc_resp-reg_receiver"/>
</dbReference>
<dbReference type="InterPro" id="IPR039420">
    <property type="entry name" value="WalR-like"/>
</dbReference>
<dbReference type="InterPro" id="IPR036388">
    <property type="entry name" value="WH-like_DNA-bd_sf"/>
</dbReference>
<dbReference type="PANTHER" id="PTHR48111">
    <property type="entry name" value="REGULATOR OF RPOS"/>
    <property type="match status" value="1"/>
</dbReference>
<dbReference type="PANTHER" id="PTHR48111:SF27">
    <property type="entry name" value="SENSORY TRANSDUCTION PROTEIN BCER"/>
    <property type="match status" value="1"/>
</dbReference>
<dbReference type="Pfam" id="PF00072">
    <property type="entry name" value="Response_reg"/>
    <property type="match status" value="1"/>
</dbReference>
<dbReference type="Pfam" id="PF00486">
    <property type="entry name" value="Trans_reg_C"/>
    <property type="match status" value="1"/>
</dbReference>
<dbReference type="SMART" id="SM00448">
    <property type="entry name" value="REC"/>
    <property type="match status" value="1"/>
</dbReference>
<dbReference type="SMART" id="SM00862">
    <property type="entry name" value="Trans_reg_C"/>
    <property type="match status" value="1"/>
</dbReference>
<dbReference type="SUPFAM" id="SSF46894">
    <property type="entry name" value="C-terminal effector domain of the bipartite response regulators"/>
    <property type="match status" value="1"/>
</dbReference>
<dbReference type="SUPFAM" id="SSF52172">
    <property type="entry name" value="CheY-like"/>
    <property type="match status" value="1"/>
</dbReference>
<dbReference type="PROSITE" id="PS51755">
    <property type="entry name" value="OMPR_PHOB"/>
    <property type="match status" value="1"/>
</dbReference>
<dbReference type="PROSITE" id="PS50110">
    <property type="entry name" value="RESPONSE_REGULATORY"/>
    <property type="match status" value="1"/>
</dbReference>
<gene>
    <name type="primary">graR</name>
    <name type="ordered locus">SaurJH1_0697</name>
</gene>
<reference key="1">
    <citation type="submission" date="2007-06" db="EMBL/GenBank/DDBJ databases">
        <title>Complete sequence of chromosome of Staphylococcus aureus subsp. aureus JH1.</title>
        <authorList>
            <consortium name="US DOE Joint Genome Institute"/>
            <person name="Copeland A."/>
            <person name="Lucas S."/>
            <person name="Lapidus A."/>
            <person name="Barry K."/>
            <person name="Detter J.C."/>
            <person name="Glavina del Rio T."/>
            <person name="Hammon N."/>
            <person name="Israni S."/>
            <person name="Dalin E."/>
            <person name="Tice H."/>
            <person name="Pitluck S."/>
            <person name="Chain P."/>
            <person name="Malfatti S."/>
            <person name="Shin M."/>
            <person name="Vergez L."/>
            <person name="Schmutz J."/>
            <person name="Larimer F."/>
            <person name="Land M."/>
            <person name="Hauser L."/>
            <person name="Kyrpides N."/>
            <person name="Ivanova N."/>
            <person name="Tomasz A."/>
            <person name="Richardson P."/>
        </authorList>
    </citation>
    <scope>NUCLEOTIDE SEQUENCE [LARGE SCALE GENOMIC DNA]</scope>
    <source>
        <strain>JH1</strain>
    </source>
</reference>
<feature type="chain" id="PRO_0000347897" description="Response regulator protein GraR">
    <location>
        <begin position="1"/>
        <end position="224"/>
    </location>
</feature>
<feature type="domain" description="Response regulatory" evidence="4">
    <location>
        <begin position="2"/>
        <end position="115"/>
    </location>
</feature>
<feature type="DNA-binding region" description="OmpR/PhoB-type" evidence="5">
    <location>
        <begin position="126"/>
        <end position="224"/>
    </location>
</feature>
<feature type="modified residue" description="4-aspartylphosphate" evidence="4">
    <location>
        <position position="51"/>
    </location>
</feature>
<feature type="modified residue" description="Phosphothreonine" evidence="3">
    <location>
        <position position="128"/>
    </location>
</feature>
<feature type="modified residue" description="Phosphothreonine" evidence="3">
    <location>
        <position position="130"/>
    </location>
</feature>
<feature type="modified residue" description="Phosphothreonine" evidence="3">
    <location>
        <position position="149"/>
    </location>
</feature>
<proteinExistence type="inferred from homology"/>
<comment type="function">
    <text evidence="3">Member of the two-component regulatory system GraR/GraS involved in resistance against cationic antimicrobial peptides (CAMPs). Upon phosphorylation by GraS, functions as a transcription regulator by direct binding to promoter regions of target genes such as adhesins, exoproteins, transporters, toxins, and proteins involved in cell wall synthesis. Down-regulates the expression of many genes involved in RNA and amino acid synthesis or glycolysis.</text>
</comment>
<comment type="subunit">
    <text evidence="2">Interacts with GraX.</text>
</comment>
<comment type="subcellular location">
    <subcellularLocation>
        <location evidence="1">Cytoplasm</location>
    </subcellularLocation>
</comment>
<comment type="PTM">
    <text evidence="3">Phosphorylated by GraS. Phosphorylated by Stk1; phosphorylation increases the DNA-binding activity of GraR.</text>
</comment>
<name>GRAR_STAA2</name>
<organism>
    <name type="scientific">Staphylococcus aureus (strain JH1)</name>
    <dbReference type="NCBI Taxonomy" id="359787"/>
    <lineage>
        <taxon>Bacteria</taxon>
        <taxon>Bacillati</taxon>
        <taxon>Bacillota</taxon>
        <taxon>Bacilli</taxon>
        <taxon>Bacillales</taxon>
        <taxon>Staphylococcaceae</taxon>
        <taxon>Staphylococcus</taxon>
    </lineage>
</organism>